<gene>
    <name type="primary">mauM</name>
    <name type="ordered locus">MexAM1_META1p2778</name>
</gene>
<comment type="function">
    <text evidence="3">Involved in electron transfer.</text>
</comment>
<comment type="pathway">
    <text>One-carbon metabolism; methylamine degradation.</text>
</comment>
<sequence>MAKPKSPSRRELLTNGVKAAGVTCLAGLALTAYVESASKAEAKALRPPGALPEDDFLAACVRCGLCVRACPYDTLRLAEMGEEAPLGTPFFVARETPCFMCTDVPCAKACPTGALDRDIPNIRKADMGVAVLVGHESCLNYKGITCSICHRVCPIRDEAITLEVQTIKGRRMVIPTVHSDKCTGCGTCEKHCVLGQAAIRVLPRELGLGGRGRNPAGRAV</sequence>
<proteinExistence type="predicted"/>
<name>MAUM_METEA</name>
<evidence type="ECO:0000250" key="1"/>
<evidence type="ECO:0000255" key="2">
    <source>
        <dbReference type="PROSITE-ProRule" id="PRU00711"/>
    </source>
</evidence>
<evidence type="ECO:0000305" key="3"/>
<dbReference type="EMBL" id="L26406">
    <property type="protein sequence ID" value="AAB46941.1"/>
    <property type="molecule type" value="Genomic_DNA"/>
</dbReference>
<dbReference type="EMBL" id="CP001510">
    <property type="protein sequence ID" value="ACS40536.1"/>
    <property type="molecule type" value="Genomic_DNA"/>
</dbReference>
<dbReference type="STRING" id="272630.MexAM1_META1p2778"/>
<dbReference type="KEGG" id="mea:Mex_1p2778"/>
<dbReference type="eggNOG" id="COG0437">
    <property type="taxonomic scope" value="Bacteria"/>
</dbReference>
<dbReference type="HOGENOM" id="CLU_077329_0_0_5"/>
<dbReference type="OrthoDB" id="9808559at2"/>
<dbReference type="UniPathway" id="UPA00895"/>
<dbReference type="Proteomes" id="UP000009081">
    <property type="component" value="Chromosome"/>
</dbReference>
<dbReference type="GO" id="GO:0051539">
    <property type="term" value="F:4 iron, 4 sulfur cluster binding"/>
    <property type="evidence" value="ECO:0007669"/>
    <property type="project" value="UniProtKB-KW"/>
</dbReference>
<dbReference type="GO" id="GO:0046872">
    <property type="term" value="F:metal ion binding"/>
    <property type="evidence" value="ECO:0007669"/>
    <property type="project" value="UniProtKB-KW"/>
</dbReference>
<dbReference type="CDD" id="cd16373">
    <property type="entry name" value="DMSOR_beta_like"/>
    <property type="match status" value="1"/>
</dbReference>
<dbReference type="Gene3D" id="3.30.70.20">
    <property type="match status" value="2"/>
</dbReference>
<dbReference type="InterPro" id="IPR017896">
    <property type="entry name" value="4Fe4S_Fe-S-bd"/>
</dbReference>
<dbReference type="InterPro" id="IPR017900">
    <property type="entry name" value="4Fe4S_Fe_S_CS"/>
</dbReference>
<dbReference type="InterPro" id="IPR004494">
    <property type="entry name" value="MauM_NapG"/>
</dbReference>
<dbReference type="InterPro" id="IPR006311">
    <property type="entry name" value="TAT_signal"/>
</dbReference>
<dbReference type="NCBIfam" id="TIGR00397">
    <property type="entry name" value="mauM_napG"/>
    <property type="match status" value="1"/>
</dbReference>
<dbReference type="NCBIfam" id="NF007012">
    <property type="entry name" value="PRK09476.1"/>
    <property type="match status" value="1"/>
</dbReference>
<dbReference type="Pfam" id="PF12838">
    <property type="entry name" value="Fer4_7"/>
    <property type="match status" value="2"/>
</dbReference>
<dbReference type="SUPFAM" id="SSF54862">
    <property type="entry name" value="4Fe-4S ferredoxins"/>
    <property type="match status" value="1"/>
</dbReference>
<dbReference type="PROSITE" id="PS00198">
    <property type="entry name" value="4FE4S_FER_1"/>
    <property type="match status" value="1"/>
</dbReference>
<dbReference type="PROSITE" id="PS51379">
    <property type="entry name" value="4FE4S_FER_2"/>
    <property type="match status" value="3"/>
</dbReference>
<dbReference type="PROSITE" id="PS51318">
    <property type="entry name" value="TAT"/>
    <property type="match status" value="1"/>
</dbReference>
<protein>
    <recommendedName>
        <fullName>Methylamine utilization ferredoxin-type protein MauM</fullName>
    </recommendedName>
</protein>
<organism>
    <name type="scientific">Methylorubrum extorquens (strain ATCC 14718 / DSM 1338 / JCM 2805 / NCIMB 9133 / AM1)</name>
    <name type="common">Methylobacterium extorquens</name>
    <dbReference type="NCBI Taxonomy" id="272630"/>
    <lineage>
        <taxon>Bacteria</taxon>
        <taxon>Pseudomonadati</taxon>
        <taxon>Pseudomonadota</taxon>
        <taxon>Alphaproteobacteria</taxon>
        <taxon>Hyphomicrobiales</taxon>
        <taxon>Methylobacteriaceae</taxon>
        <taxon>Methylorubrum</taxon>
    </lineage>
</organism>
<feature type="chain" id="PRO_0000159285" description="Methylamine utilization ferredoxin-type protein MauM">
    <location>
        <begin position="1"/>
        <end position="220"/>
    </location>
</feature>
<feature type="domain" description="4Fe-4S ferredoxin-type 1" evidence="2">
    <location>
        <begin position="50"/>
        <end position="80"/>
    </location>
</feature>
<feature type="domain" description="4Fe-4S ferredoxin-type 2" evidence="2">
    <location>
        <begin position="88"/>
        <end position="120"/>
    </location>
</feature>
<feature type="domain" description="4Fe-4S ferredoxin-type 3" evidence="2">
    <location>
        <begin position="173"/>
        <end position="204"/>
    </location>
</feature>
<feature type="binding site" evidence="1">
    <location>
        <position position="60"/>
    </location>
    <ligand>
        <name>[4Fe-4S] cluster</name>
        <dbReference type="ChEBI" id="CHEBI:49883"/>
        <label>1</label>
    </ligand>
</feature>
<feature type="binding site" evidence="1">
    <location>
        <position position="63"/>
    </location>
    <ligand>
        <name>[4Fe-4S] cluster</name>
        <dbReference type="ChEBI" id="CHEBI:49883"/>
        <label>1</label>
    </ligand>
</feature>
<feature type="binding site" evidence="1">
    <location>
        <position position="66"/>
    </location>
    <ligand>
        <name>[4Fe-4S] cluster</name>
        <dbReference type="ChEBI" id="CHEBI:49883"/>
        <label>1</label>
    </ligand>
</feature>
<feature type="binding site" evidence="1">
    <location>
        <position position="70"/>
    </location>
    <ligand>
        <name>[4Fe-4S] cluster</name>
        <dbReference type="ChEBI" id="CHEBI:49883"/>
        <label>2</label>
    </ligand>
</feature>
<feature type="binding site" evidence="1">
    <location>
        <position position="98"/>
    </location>
    <ligand>
        <name>[4Fe-4S] cluster</name>
        <dbReference type="ChEBI" id="CHEBI:49883"/>
        <label>2</label>
    </ligand>
</feature>
<feature type="binding site" evidence="1">
    <location>
        <position position="101"/>
    </location>
    <ligand>
        <name>[4Fe-4S] cluster</name>
        <dbReference type="ChEBI" id="CHEBI:49883"/>
        <label>2</label>
    </ligand>
</feature>
<feature type="binding site" evidence="1">
    <location>
        <position position="106"/>
    </location>
    <ligand>
        <name>[4Fe-4S] cluster</name>
        <dbReference type="ChEBI" id="CHEBI:49883"/>
        <label>2</label>
    </ligand>
</feature>
<feature type="binding site" evidence="1">
    <location>
        <position position="110"/>
    </location>
    <ligand>
        <name>[4Fe-4S] cluster</name>
        <dbReference type="ChEBI" id="CHEBI:49883"/>
        <label>1</label>
    </ligand>
</feature>
<feature type="binding site" evidence="1">
    <location>
        <position position="138"/>
    </location>
    <ligand>
        <name>[4Fe-4S] cluster</name>
        <dbReference type="ChEBI" id="CHEBI:49883"/>
        <label>3</label>
    </ligand>
</feature>
<feature type="binding site" evidence="1">
    <location>
        <position position="146"/>
    </location>
    <ligand>
        <name>[4Fe-4S] cluster</name>
        <dbReference type="ChEBI" id="CHEBI:49883"/>
        <label>3</label>
    </ligand>
</feature>
<feature type="binding site" evidence="1">
    <location>
        <position position="149"/>
    </location>
    <ligand>
        <name>[4Fe-4S] cluster</name>
        <dbReference type="ChEBI" id="CHEBI:49883"/>
        <label>3</label>
    </ligand>
</feature>
<feature type="binding site" evidence="1">
    <location>
        <position position="153"/>
    </location>
    <ligand>
        <name>[4Fe-4S] cluster</name>
        <dbReference type="ChEBI" id="CHEBI:49883"/>
        <label>4</label>
    </ligand>
</feature>
<feature type="binding site" evidence="1">
    <location>
        <position position="182"/>
    </location>
    <ligand>
        <name>[4Fe-4S] cluster</name>
        <dbReference type="ChEBI" id="CHEBI:49883"/>
        <label>4</label>
    </ligand>
</feature>
<feature type="binding site" evidence="1">
    <location>
        <position position="185"/>
    </location>
    <ligand>
        <name>[4Fe-4S] cluster</name>
        <dbReference type="ChEBI" id="CHEBI:49883"/>
        <label>4</label>
    </ligand>
</feature>
<feature type="binding site" evidence="1">
    <location>
        <position position="188"/>
    </location>
    <ligand>
        <name>[4Fe-4S] cluster</name>
        <dbReference type="ChEBI" id="CHEBI:49883"/>
        <label>4</label>
    </ligand>
</feature>
<feature type="binding site" evidence="1">
    <location>
        <position position="192"/>
    </location>
    <ligand>
        <name>[4Fe-4S] cluster</name>
        <dbReference type="ChEBI" id="CHEBI:49883"/>
        <label>3</label>
    </ligand>
</feature>
<accession>Q49130</accession>
<accession>C5ATL2</accession>
<reference key="1">
    <citation type="journal article" date="1994" name="J. Bacteriol.">
        <title>Genetic organization of the mau gene cluster in Methylobacterium extorquens AM1: complete nucleotide sequence and generation and characteristics of mau mutants.</title>
        <authorList>
            <person name="Chistoserdov A.Y."/>
            <person name="Chistoserdova L.V."/>
            <person name="McIntire W.S."/>
            <person name="Lidstrom M.E."/>
        </authorList>
    </citation>
    <scope>NUCLEOTIDE SEQUENCE [GENOMIC DNA]</scope>
</reference>
<reference key="2">
    <citation type="journal article" date="2009" name="PLoS ONE">
        <title>Methylobacterium genome sequences: a reference blueprint to investigate microbial metabolism of C1 compounds from natural and industrial sources.</title>
        <authorList>
            <person name="Vuilleumier S."/>
            <person name="Chistoserdova L."/>
            <person name="Lee M.-C."/>
            <person name="Bringel F."/>
            <person name="Lajus A."/>
            <person name="Zhou Y."/>
            <person name="Gourion B."/>
            <person name="Barbe V."/>
            <person name="Chang J."/>
            <person name="Cruveiller S."/>
            <person name="Dossat C."/>
            <person name="Gillett W."/>
            <person name="Gruffaz C."/>
            <person name="Haugen E."/>
            <person name="Hourcade E."/>
            <person name="Levy R."/>
            <person name="Mangenot S."/>
            <person name="Muller E."/>
            <person name="Nadalig T."/>
            <person name="Pagni M."/>
            <person name="Penny C."/>
            <person name="Peyraud R."/>
            <person name="Robinson D.G."/>
            <person name="Roche D."/>
            <person name="Rouy Z."/>
            <person name="Saenampechek C."/>
            <person name="Salvignol G."/>
            <person name="Vallenet D."/>
            <person name="Wu Z."/>
            <person name="Marx C.J."/>
            <person name="Vorholt J.A."/>
            <person name="Olson M.V."/>
            <person name="Kaul R."/>
            <person name="Weissenbach J."/>
            <person name="Medigue C."/>
            <person name="Lidstrom M.E."/>
        </authorList>
    </citation>
    <scope>NUCLEOTIDE SEQUENCE [LARGE SCALE GENOMIC DNA]</scope>
    <source>
        <strain>ATCC 14718 / DSM 1338 / JCM 2805 / NCIMB 9133 / AM1</strain>
    </source>
</reference>
<keyword id="KW-0004">4Fe-4S</keyword>
<keyword id="KW-0249">Electron transport</keyword>
<keyword id="KW-0408">Iron</keyword>
<keyword id="KW-0411">Iron-sulfur</keyword>
<keyword id="KW-0479">Metal-binding</keyword>
<keyword id="KW-1185">Reference proteome</keyword>
<keyword id="KW-0677">Repeat</keyword>
<keyword id="KW-0813">Transport</keyword>